<name>THIQ_SALCH</name>
<evidence type="ECO:0000255" key="1">
    <source>
        <dbReference type="HAMAP-Rule" id="MF_01723"/>
    </source>
</evidence>
<comment type="function">
    <text evidence="1">Part of the ABC transporter complex ThiBPQ involved in thiamine import. Responsible for energy coupling to the transport system.</text>
</comment>
<comment type="catalytic activity">
    <reaction evidence="1">
        <text>thiamine(out) + ATP + H2O = thiamine(in) + ADP + phosphate + H(+)</text>
        <dbReference type="Rhea" id="RHEA:29811"/>
        <dbReference type="ChEBI" id="CHEBI:15377"/>
        <dbReference type="ChEBI" id="CHEBI:15378"/>
        <dbReference type="ChEBI" id="CHEBI:18385"/>
        <dbReference type="ChEBI" id="CHEBI:30616"/>
        <dbReference type="ChEBI" id="CHEBI:43474"/>
        <dbReference type="ChEBI" id="CHEBI:456216"/>
        <dbReference type="EC" id="7.6.2.15"/>
    </reaction>
</comment>
<comment type="subunit">
    <text evidence="1">The complex is composed of two ATP-binding proteins (ThiQ), two transmembrane proteins (ThiP) and a solute-binding protein (ThiB).</text>
</comment>
<comment type="subcellular location">
    <subcellularLocation>
        <location evidence="1">Cell inner membrane</location>
        <topology evidence="1">Peripheral membrane protein</topology>
    </subcellularLocation>
</comment>
<comment type="similarity">
    <text evidence="1">Belongs to the ABC transporter superfamily. Thiamine importer (TC 3.A.1.19.1) family.</text>
</comment>
<feature type="chain" id="PRO_0000274454" description="Thiamine import ATP-binding protein ThiQ">
    <location>
        <begin position="1"/>
        <end position="235"/>
    </location>
</feature>
<feature type="domain" description="ABC transporter" evidence="1">
    <location>
        <begin position="2"/>
        <end position="230"/>
    </location>
</feature>
<feature type="binding site" evidence="1">
    <location>
        <begin position="32"/>
        <end position="39"/>
    </location>
    <ligand>
        <name>ATP</name>
        <dbReference type="ChEBI" id="CHEBI:30616"/>
    </ligand>
</feature>
<organism>
    <name type="scientific">Salmonella choleraesuis (strain SC-B67)</name>
    <dbReference type="NCBI Taxonomy" id="321314"/>
    <lineage>
        <taxon>Bacteria</taxon>
        <taxon>Pseudomonadati</taxon>
        <taxon>Pseudomonadota</taxon>
        <taxon>Gammaproteobacteria</taxon>
        <taxon>Enterobacterales</taxon>
        <taxon>Enterobacteriaceae</taxon>
        <taxon>Salmonella</taxon>
    </lineage>
</organism>
<dbReference type="EC" id="7.6.2.15" evidence="1"/>
<dbReference type="EMBL" id="AE017220">
    <property type="protein sequence ID" value="AAX64006.1"/>
    <property type="molecule type" value="Genomic_DNA"/>
</dbReference>
<dbReference type="RefSeq" id="WP_001538961.1">
    <property type="nucleotide sequence ID" value="NC_006905.1"/>
</dbReference>
<dbReference type="SMR" id="Q57TF5"/>
<dbReference type="KEGG" id="sec:SCH_0100"/>
<dbReference type="HOGENOM" id="CLU_000604_1_22_6"/>
<dbReference type="Proteomes" id="UP000000538">
    <property type="component" value="Chromosome"/>
</dbReference>
<dbReference type="GO" id="GO:0005886">
    <property type="term" value="C:plasma membrane"/>
    <property type="evidence" value="ECO:0007669"/>
    <property type="project" value="UniProtKB-SubCell"/>
</dbReference>
<dbReference type="GO" id="GO:0048502">
    <property type="term" value="F:ABC-type thiamine transporter activity"/>
    <property type="evidence" value="ECO:0007669"/>
    <property type="project" value="UniProtKB-EC"/>
</dbReference>
<dbReference type="GO" id="GO:0005524">
    <property type="term" value="F:ATP binding"/>
    <property type="evidence" value="ECO:0007669"/>
    <property type="project" value="UniProtKB-KW"/>
</dbReference>
<dbReference type="GO" id="GO:0016887">
    <property type="term" value="F:ATP hydrolysis activity"/>
    <property type="evidence" value="ECO:0007669"/>
    <property type="project" value="InterPro"/>
</dbReference>
<dbReference type="FunFam" id="3.40.50.300:FF:001071">
    <property type="entry name" value="Thiamine import ATP-binding protein ThiQ"/>
    <property type="match status" value="1"/>
</dbReference>
<dbReference type="Gene3D" id="3.40.50.300">
    <property type="entry name" value="P-loop containing nucleotide triphosphate hydrolases"/>
    <property type="match status" value="1"/>
</dbReference>
<dbReference type="InterPro" id="IPR003593">
    <property type="entry name" value="AAA+_ATPase"/>
</dbReference>
<dbReference type="InterPro" id="IPR050093">
    <property type="entry name" value="ABC_SmlMolc_Importer"/>
</dbReference>
<dbReference type="InterPro" id="IPR003439">
    <property type="entry name" value="ABC_transporter-like_ATP-bd"/>
</dbReference>
<dbReference type="InterPro" id="IPR017871">
    <property type="entry name" value="ABC_transporter-like_CS"/>
</dbReference>
<dbReference type="InterPro" id="IPR027417">
    <property type="entry name" value="P-loop_NTPase"/>
</dbReference>
<dbReference type="InterPro" id="IPR005968">
    <property type="entry name" value="Thiamine_ABC_ThiQ"/>
</dbReference>
<dbReference type="NCBIfam" id="NF008039">
    <property type="entry name" value="PRK10771.1"/>
    <property type="match status" value="1"/>
</dbReference>
<dbReference type="NCBIfam" id="TIGR01277">
    <property type="entry name" value="thiQ"/>
    <property type="match status" value="1"/>
</dbReference>
<dbReference type="PANTHER" id="PTHR42781">
    <property type="entry name" value="SPERMIDINE/PUTRESCINE IMPORT ATP-BINDING PROTEIN POTA"/>
    <property type="match status" value="1"/>
</dbReference>
<dbReference type="PANTHER" id="PTHR42781:SF1">
    <property type="entry name" value="THIAMINE IMPORT ATP-BINDING PROTEIN THIQ"/>
    <property type="match status" value="1"/>
</dbReference>
<dbReference type="Pfam" id="PF00005">
    <property type="entry name" value="ABC_tran"/>
    <property type="match status" value="1"/>
</dbReference>
<dbReference type="SMART" id="SM00382">
    <property type="entry name" value="AAA"/>
    <property type="match status" value="1"/>
</dbReference>
<dbReference type="SUPFAM" id="SSF52540">
    <property type="entry name" value="P-loop containing nucleoside triphosphate hydrolases"/>
    <property type="match status" value="1"/>
</dbReference>
<dbReference type="PROSITE" id="PS00211">
    <property type="entry name" value="ABC_TRANSPORTER_1"/>
    <property type="match status" value="1"/>
</dbReference>
<dbReference type="PROSITE" id="PS50893">
    <property type="entry name" value="ABC_TRANSPORTER_2"/>
    <property type="match status" value="1"/>
</dbReference>
<dbReference type="PROSITE" id="PS51288">
    <property type="entry name" value="THIQ"/>
    <property type="match status" value="1"/>
</dbReference>
<proteinExistence type="inferred from homology"/>
<keyword id="KW-0067">ATP-binding</keyword>
<keyword id="KW-0997">Cell inner membrane</keyword>
<keyword id="KW-1003">Cell membrane</keyword>
<keyword id="KW-0472">Membrane</keyword>
<keyword id="KW-0547">Nucleotide-binding</keyword>
<keyword id="KW-1278">Translocase</keyword>
<keyword id="KW-0813">Transport</keyword>
<reference key="1">
    <citation type="journal article" date="2005" name="Nucleic Acids Res.">
        <title>The genome sequence of Salmonella enterica serovar Choleraesuis, a highly invasive and resistant zoonotic pathogen.</title>
        <authorList>
            <person name="Chiu C.-H."/>
            <person name="Tang P."/>
            <person name="Chu C."/>
            <person name="Hu S."/>
            <person name="Bao Q."/>
            <person name="Yu J."/>
            <person name="Chou Y.-Y."/>
            <person name="Wang H.-S."/>
            <person name="Lee Y.-S."/>
        </authorList>
    </citation>
    <scope>NUCLEOTIDE SEQUENCE [LARGE SCALE GENOMIC DNA]</scope>
    <source>
        <strain>SC-B67</strain>
    </source>
</reference>
<accession>Q57TF5</accession>
<gene>
    <name evidence="1" type="primary">thiQ</name>
    <name type="ordered locus">SCH_0100</name>
</gene>
<protein>
    <recommendedName>
        <fullName evidence="1">Thiamine import ATP-binding protein ThiQ</fullName>
        <ecNumber evidence="1">7.6.2.15</ecNumber>
    </recommendedName>
</protein>
<sequence length="235" mass="25634">MLKLIDITWLYHHLPMRFTLAVERGEQVAILGPSGAGKSTLLNLIAGFLAPASGTLLIAGEDHTLTPPSRRPVSMLFQENNLFSHLNVQQNIGLGLNPGLTLNASQREKRDAIARQMGIESLMTRLPGELSGGQRQRVALARCLVREQPVLLLDEPFSALDPTLRQEMLTLVSDICRERQLTLLMVSHSVEDAARIAPRSIVVADGRIAWQGKTDELLSGQASASALLGIKSHIL</sequence>